<sequence>MARGGFPGGMGNMNNLMKQAQMLQKQMQSMQEEIEASEFEGSAGGGAVVAKVNGKKELIALNIKPEVVDPDDVEMLEDLVFSAVKQALEKASEETSEKMGKLTGGMGMPGLF</sequence>
<gene>
    <name type="ordered locus">CPF_0053</name>
</gene>
<evidence type="ECO:0000255" key="1">
    <source>
        <dbReference type="HAMAP-Rule" id="MF_00274"/>
    </source>
</evidence>
<evidence type="ECO:0000256" key="2">
    <source>
        <dbReference type="SAM" id="MobiDB-lite"/>
    </source>
</evidence>
<dbReference type="EMBL" id="CP000246">
    <property type="protein sequence ID" value="ABG84016.1"/>
    <property type="molecule type" value="Genomic_DNA"/>
</dbReference>
<dbReference type="RefSeq" id="WP_003458189.1">
    <property type="nucleotide sequence ID" value="NC_008261.1"/>
</dbReference>
<dbReference type="SMR" id="Q0TV21"/>
<dbReference type="STRING" id="195103.CPF_0053"/>
<dbReference type="PaxDb" id="195103-CPF_0053"/>
<dbReference type="KEGG" id="cpf:CPF_0053"/>
<dbReference type="eggNOG" id="COG0718">
    <property type="taxonomic scope" value="Bacteria"/>
</dbReference>
<dbReference type="HOGENOM" id="CLU_140930_1_0_9"/>
<dbReference type="Proteomes" id="UP000001823">
    <property type="component" value="Chromosome"/>
</dbReference>
<dbReference type="GO" id="GO:0043590">
    <property type="term" value="C:bacterial nucleoid"/>
    <property type="evidence" value="ECO:0007669"/>
    <property type="project" value="UniProtKB-UniRule"/>
</dbReference>
<dbReference type="GO" id="GO:0005829">
    <property type="term" value="C:cytosol"/>
    <property type="evidence" value="ECO:0007669"/>
    <property type="project" value="TreeGrafter"/>
</dbReference>
<dbReference type="GO" id="GO:0003677">
    <property type="term" value="F:DNA binding"/>
    <property type="evidence" value="ECO:0007669"/>
    <property type="project" value="UniProtKB-UniRule"/>
</dbReference>
<dbReference type="Gene3D" id="3.30.1310.10">
    <property type="entry name" value="Nucleoid-associated protein YbaB-like domain"/>
    <property type="match status" value="1"/>
</dbReference>
<dbReference type="HAMAP" id="MF_00274">
    <property type="entry name" value="DNA_YbaB_EbfC"/>
    <property type="match status" value="1"/>
</dbReference>
<dbReference type="InterPro" id="IPR036894">
    <property type="entry name" value="YbaB-like_sf"/>
</dbReference>
<dbReference type="InterPro" id="IPR004401">
    <property type="entry name" value="YbaB/EbfC"/>
</dbReference>
<dbReference type="NCBIfam" id="TIGR00103">
    <property type="entry name" value="DNA_YbaB_EbfC"/>
    <property type="match status" value="1"/>
</dbReference>
<dbReference type="PANTHER" id="PTHR33449">
    <property type="entry name" value="NUCLEOID-ASSOCIATED PROTEIN YBAB"/>
    <property type="match status" value="1"/>
</dbReference>
<dbReference type="PANTHER" id="PTHR33449:SF1">
    <property type="entry name" value="NUCLEOID-ASSOCIATED PROTEIN YBAB"/>
    <property type="match status" value="1"/>
</dbReference>
<dbReference type="Pfam" id="PF02575">
    <property type="entry name" value="YbaB_DNA_bd"/>
    <property type="match status" value="1"/>
</dbReference>
<dbReference type="PIRSF" id="PIRSF004555">
    <property type="entry name" value="UCP004555"/>
    <property type="match status" value="1"/>
</dbReference>
<dbReference type="SUPFAM" id="SSF82607">
    <property type="entry name" value="YbaB-like"/>
    <property type="match status" value="1"/>
</dbReference>
<reference key="1">
    <citation type="journal article" date="2006" name="Genome Res.">
        <title>Skewed genomic variability in strains of the toxigenic bacterial pathogen, Clostridium perfringens.</title>
        <authorList>
            <person name="Myers G.S.A."/>
            <person name="Rasko D.A."/>
            <person name="Cheung J.K."/>
            <person name="Ravel J."/>
            <person name="Seshadri R."/>
            <person name="DeBoy R.T."/>
            <person name="Ren Q."/>
            <person name="Varga J."/>
            <person name="Awad M.M."/>
            <person name="Brinkac L.M."/>
            <person name="Daugherty S.C."/>
            <person name="Haft D.H."/>
            <person name="Dodson R.J."/>
            <person name="Madupu R."/>
            <person name="Nelson W.C."/>
            <person name="Rosovitz M.J."/>
            <person name="Sullivan S.A."/>
            <person name="Khouri H."/>
            <person name="Dimitrov G.I."/>
            <person name="Watkins K.L."/>
            <person name="Mulligan S."/>
            <person name="Benton J."/>
            <person name="Radune D."/>
            <person name="Fisher D.J."/>
            <person name="Atkins H.S."/>
            <person name="Hiscox T."/>
            <person name="Jost B.H."/>
            <person name="Billington S.J."/>
            <person name="Songer J.G."/>
            <person name="McClane B.A."/>
            <person name="Titball R.W."/>
            <person name="Rood J.I."/>
            <person name="Melville S.B."/>
            <person name="Paulsen I.T."/>
        </authorList>
    </citation>
    <scope>NUCLEOTIDE SEQUENCE [LARGE SCALE GENOMIC DNA]</scope>
    <source>
        <strain>ATCC 13124 / DSM 756 / JCM 1290 / NCIMB 6125 / NCTC 8237 / S 107 / Type A</strain>
    </source>
</reference>
<feature type="chain" id="PRO_1000003730" description="Nucleoid-associated protein CPF_0053">
    <location>
        <begin position="1"/>
        <end position="112"/>
    </location>
</feature>
<feature type="region of interest" description="Disordered" evidence="2">
    <location>
        <begin position="91"/>
        <end position="112"/>
    </location>
</feature>
<feature type="compositionally biased region" description="Basic and acidic residues" evidence="2">
    <location>
        <begin position="91"/>
        <end position="100"/>
    </location>
</feature>
<feature type="compositionally biased region" description="Gly residues" evidence="2">
    <location>
        <begin position="102"/>
        <end position="112"/>
    </location>
</feature>
<proteinExistence type="inferred from homology"/>
<keyword id="KW-0963">Cytoplasm</keyword>
<keyword id="KW-0238">DNA-binding</keyword>
<accession>Q0TV21</accession>
<protein>
    <recommendedName>
        <fullName evidence="1">Nucleoid-associated protein CPF_0053</fullName>
    </recommendedName>
</protein>
<comment type="function">
    <text evidence="1">Binds to DNA and alters its conformation. May be involved in regulation of gene expression, nucleoid organization and DNA protection.</text>
</comment>
<comment type="subunit">
    <text evidence="1">Homodimer.</text>
</comment>
<comment type="subcellular location">
    <subcellularLocation>
        <location evidence="1">Cytoplasm</location>
        <location evidence="1">Nucleoid</location>
    </subcellularLocation>
</comment>
<comment type="similarity">
    <text evidence="1">Belongs to the YbaB/EbfC family.</text>
</comment>
<organism>
    <name type="scientific">Clostridium perfringens (strain ATCC 13124 / DSM 756 / JCM 1290 / NCIMB 6125 / NCTC 8237 / Type A)</name>
    <dbReference type="NCBI Taxonomy" id="195103"/>
    <lineage>
        <taxon>Bacteria</taxon>
        <taxon>Bacillati</taxon>
        <taxon>Bacillota</taxon>
        <taxon>Clostridia</taxon>
        <taxon>Eubacteriales</taxon>
        <taxon>Clostridiaceae</taxon>
        <taxon>Clostridium</taxon>
    </lineage>
</organism>
<name>Y053_CLOP1</name>